<reference key="1">
    <citation type="journal article" date="2003" name="Nature">
        <title>The DNA sequence and analysis of human chromosome 14.</title>
        <authorList>
            <person name="Heilig R."/>
            <person name="Eckenberg R."/>
            <person name="Petit J.-L."/>
            <person name="Fonknechten N."/>
            <person name="Da Silva C."/>
            <person name="Cattolico L."/>
            <person name="Levy M."/>
            <person name="Barbe V."/>
            <person name="De Berardinis V."/>
            <person name="Ureta-Vidal A."/>
            <person name="Pelletier E."/>
            <person name="Vico V."/>
            <person name="Anthouard V."/>
            <person name="Rowen L."/>
            <person name="Madan A."/>
            <person name="Qin S."/>
            <person name="Sun H."/>
            <person name="Du H."/>
            <person name="Pepin K."/>
            <person name="Artiguenave F."/>
            <person name="Robert C."/>
            <person name="Cruaud C."/>
            <person name="Bruels T."/>
            <person name="Jaillon O."/>
            <person name="Friedlander L."/>
            <person name="Samson G."/>
            <person name="Brottier P."/>
            <person name="Cure S."/>
            <person name="Segurens B."/>
            <person name="Aniere F."/>
            <person name="Samain S."/>
            <person name="Crespeau H."/>
            <person name="Abbasi N."/>
            <person name="Aiach N."/>
            <person name="Boscus D."/>
            <person name="Dickhoff R."/>
            <person name="Dors M."/>
            <person name="Dubois I."/>
            <person name="Friedman C."/>
            <person name="Gouyvenoux M."/>
            <person name="James R."/>
            <person name="Madan A."/>
            <person name="Mairey-Estrada B."/>
            <person name="Mangenot S."/>
            <person name="Martins N."/>
            <person name="Menard M."/>
            <person name="Oztas S."/>
            <person name="Ratcliffe A."/>
            <person name="Shaffer T."/>
            <person name="Trask B."/>
            <person name="Vacherie B."/>
            <person name="Bellemere C."/>
            <person name="Belser C."/>
            <person name="Besnard-Gonnet M."/>
            <person name="Bartol-Mavel D."/>
            <person name="Boutard M."/>
            <person name="Briez-Silla S."/>
            <person name="Combette S."/>
            <person name="Dufosse-Laurent V."/>
            <person name="Ferron C."/>
            <person name="Lechaplais C."/>
            <person name="Louesse C."/>
            <person name="Muselet D."/>
            <person name="Magdelenat G."/>
            <person name="Pateau E."/>
            <person name="Petit E."/>
            <person name="Sirvain-Trukniewicz P."/>
            <person name="Trybou A."/>
            <person name="Vega-Czarny N."/>
            <person name="Bataille E."/>
            <person name="Bluet E."/>
            <person name="Bordelais I."/>
            <person name="Dubois M."/>
            <person name="Dumont C."/>
            <person name="Guerin T."/>
            <person name="Haffray S."/>
            <person name="Hammadi R."/>
            <person name="Muanga J."/>
            <person name="Pellouin V."/>
            <person name="Robert D."/>
            <person name="Wunderle E."/>
            <person name="Gauguet G."/>
            <person name="Roy A."/>
            <person name="Sainte-Marthe L."/>
            <person name="Verdier J."/>
            <person name="Verdier-Discala C."/>
            <person name="Hillier L.W."/>
            <person name="Fulton L."/>
            <person name="McPherson J."/>
            <person name="Matsuda F."/>
            <person name="Wilson R."/>
            <person name="Scarpelli C."/>
            <person name="Gyapay G."/>
            <person name="Wincker P."/>
            <person name="Saurin W."/>
            <person name="Quetier F."/>
            <person name="Waterston R."/>
            <person name="Hood L."/>
            <person name="Weissenbach J."/>
        </authorList>
    </citation>
    <scope>NUCLEOTIDE SEQUENCE [LARGE SCALE GENOMIC DNA] (IMGT ALLELE IGHV4-34*01)</scope>
</reference>
<reference key="2">
    <citation type="journal article" date="1985" name="Gene">
        <title>A cloned human immunoglobulin heavy chain gene with a novel direct-repeat sequence in 5' flanking region.</title>
        <authorList>
            <person name="Kudo A."/>
            <person name="Ishihara T."/>
            <person name="Nishimura Y."/>
            <person name="Watanabe T."/>
        </authorList>
    </citation>
    <scope>NUCLEOTIDE SEQUENCE [GENOMIC DNA] OF 8-123</scope>
    <scope>PROTEIN SEQUENCE OF 115-123</scope>
</reference>
<reference key="3">
    <citation type="journal article" date="2001" name="Exp. Clin. Immunogenet.">
        <title>Nomenclature of the human immunoglobulin heavy (IGH) genes.</title>
        <authorList>
            <person name="Lefranc M.P."/>
        </authorList>
    </citation>
    <scope>NOMENCLATURE</scope>
</reference>
<reference key="4">
    <citation type="book" date="2001" name="The Immunoglobulin FactsBook.">
        <title>The Immunoglobulin FactsBook.</title>
        <editorList>
            <person name="Lefranc M.P."/>
            <person name="Lefranc G."/>
        </editorList>
        <authorList>
            <person name="Lefranc M.P."/>
            <person name="Lefranc G."/>
        </authorList>
    </citation>
    <scope>NOMENCLATURE</scope>
</reference>
<reference key="5">
    <citation type="journal article" date="2007" name="Annu. Rev. Genet.">
        <title>Immunoglobulin somatic hypermutation.</title>
        <authorList>
            <person name="Teng G."/>
            <person name="Papavasiliou F.N."/>
        </authorList>
    </citation>
    <scope>REVIEW ON SOMATIC HYPERMUTATION</scope>
</reference>
<reference key="6">
    <citation type="journal article" date="2010" name="J. Allergy Clin. Immunol.">
        <title>Structure and function of immunoglobulins.</title>
        <authorList>
            <person name="Schroeder H.W. Jr."/>
            <person name="Cavacini L."/>
        </authorList>
    </citation>
    <scope>REVIEW ON IMMUNOGLOBULINS</scope>
</reference>
<reference key="7">
    <citation type="journal article" date="2012" name="Nat. Rev. Immunol.">
        <title>Molecular programming of B cell memory.</title>
        <authorList>
            <person name="McHeyzer-Williams M."/>
            <person name="Okitsu S."/>
            <person name="Wang N."/>
            <person name="McHeyzer-Williams L."/>
        </authorList>
    </citation>
    <scope>REVIEW ON FUNCTION</scope>
</reference>
<reference key="8">
    <citation type="journal article" date="2014" name="Front. Immunol.">
        <title>Immunoglobulin and T Cell Receptor Genes: IMGT((R)) and the Birth and Rise of Immunoinformatics.</title>
        <authorList>
            <person name="Lefranc M.P."/>
        </authorList>
    </citation>
    <scope>NOMENCLATURE</scope>
</reference>
<comment type="function">
    <text evidence="5 6 7 8">V region of the variable domain of immunoglobulin heavy chains that participates in the antigen recognition (PubMed:24600447). Immunoglobulins, also known as antibodies, are membrane-bound or secreted glycoproteins produced by B lymphocytes. In the recognition phase of humoral immunity, the membrane-bound immunoglobulins serve as receptors which, upon binding of a specific antigen, trigger the clonal expansion and differentiation of B lymphocytes into immunoglobulins-secreting plasma cells. Secreted immunoglobulins mediate the effector phase of humoral immunity, which results in the elimination of bound antigens (PubMed:20176268, PubMed:22158414). The antigen binding site is formed by the variable domain of one heavy chain, together with that of its associated light chain. Thus, each immunoglobulin has two antigen binding sites with remarkable affinity for a particular antigen. The variable domains are assembled by a process called V-(D)-J rearrangement and can then be subjected to somatic hypermutations which, after exposure to antigen and selection, allow affinity maturation for a particular antigen (PubMed:17576170, PubMed:20176268).</text>
</comment>
<comment type="subunit">
    <text evidence="6">Immunoglobulins are composed of two identical heavy chains and two identical light chains; disulfide-linked.</text>
</comment>
<comment type="subcellular location">
    <subcellularLocation>
        <location evidence="6 7">Secreted</location>
    </subcellularLocation>
    <subcellularLocation>
        <location evidence="6 7">Cell membrane</location>
    </subcellularLocation>
</comment>
<comment type="polymorphism">
    <text evidence="10">There are several alleles. The sequence shown is that of IMGT allele IGHV4-34*01.</text>
</comment>
<comment type="caution">
    <text evidence="10">For examples of full-length immunoglobulin heavy chains (of different isotypes) see AC P0DOX2, AC P0DOX3, AC P0DOX4, AC P0DOX5 and AC P0DOX6.</text>
</comment>
<keyword id="KW-1064">Adaptive immunity</keyword>
<keyword id="KW-1003">Cell membrane</keyword>
<keyword id="KW-0903">Direct protein sequencing</keyword>
<keyword id="KW-1015">Disulfide bond</keyword>
<keyword id="KW-0325">Glycoprotein</keyword>
<keyword id="KW-0391">Immunity</keyword>
<keyword id="KW-1280">Immunoglobulin</keyword>
<keyword id="KW-0393">Immunoglobulin domain</keyword>
<keyword id="KW-0472">Membrane</keyword>
<keyword id="KW-1267">Proteomics identification</keyword>
<keyword id="KW-1185">Reference proteome</keyword>
<keyword id="KW-0964">Secreted</keyword>
<keyword id="KW-0732">Signal</keyword>
<proteinExistence type="evidence at protein level"/>
<name>HV434_HUMAN</name>
<feature type="signal peptide" evidence="2">
    <location>
        <begin position="1"/>
        <end position="26"/>
    </location>
</feature>
<feature type="chain" id="PRO_0000015248" description="Immunoglobulin heavy variable 4-34" evidence="2">
    <location>
        <begin position="27"/>
        <end position="123"/>
    </location>
</feature>
<feature type="domain" description="Ig-like" evidence="3">
    <location>
        <begin position="27"/>
        <end position="123" status="greater than"/>
    </location>
</feature>
<feature type="region of interest" description="V region">
    <location>
        <begin position="26"/>
        <end position="123"/>
    </location>
</feature>
<feature type="region of interest" description="Framework-1" evidence="1">
    <location>
        <begin position="27"/>
        <end position="51"/>
    </location>
</feature>
<feature type="region of interest" description="Complementarity-determining-1" evidence="1">
    <location>
        <begin position="52"/>
        <end position="59"/>
    </location>
</feature>
<feature type="region of interest" description="Framework-2" evidence="1">
    <location>
        <begin position="60"/>
        <end position="76"/>
    </location>
</feature>
<feature type="region of interest" description="Complementarity-determining-2" evidence="1">
    <location>
        <begin position="77"/>
        <end position="83"/>
    </location>
</feature>
<feature type="region of interest" description="Framework-3" evidence="1">
    <location>
        <begin position="84"/>
        <end position="121"/>
    </location>
</feature>
<feature type="region of interest" description="Complementarity-determining-3" evidence="1">
    <location>
        <begin position="122"/>
        <end position="123" status="greater than"/>
    </location>
</feature>
<feature type="glycosylation site" description="N-linked (GlcNAc...) asparagine" evidence="2">
    <location>
        <position position="78"/>
    </location>
</feature>
<feature type="disulfide bond" evidence="3">
    <location>
        <begin position="48"/>
        <end position="121"/>
    </location>
</feature>
<feature type="sequence conflict" description="In Ref. 2." evidence="10" ref="2">
    <original>F</original>
    <variation>L</variation>
    <location>
        <position position="14"/>
    </location>
</feature>
<feature type="sequence conflict" description="In Ref. 2." evidence="10" ref="2">
    <original>LVAAPRW</original>
    <variation>WCQLPDVG</variation>
    <location>
        <begin position="17"/>
        <end position="23"/>
    </location>
</feature>
<feature type="sequence conflict" description="In Ref. 2." evidence="10" ref="2">
    <original>L</original>
    <variation>V</variation>
    <location>
        <position position="38"/>
    </location>
</feature>
<feature type="sequence conflict" description="In Ref. 2." evidence="10" ref="2">
    <original>Y</original>
    <variation>F</variation>
    <location>
        <position position="51"/>
    </location>
</feature>
<feature type="sequence conflict" description="In Ref. 2." evidence="10" ref="2">
    <original>K</original>
    <variation>R</variation>
    <location>
        <position position="69"/>
    </location>
</feature>
<feature type="sequence conflict" description="In Ref. 2." evidence="10" ref="2">
    <original>NP</original>
    <variation>KT</variation>
    <location>
        <begin position="86"/>
        <end position="87"/>
    </location>
</feature>
<feature type="sequence conflict" description="In Ref. 2." evidence="10" ref="2">
    <original>V</original>
    <variation>L</variation>
    <location>
        <position position="97"/>
    </location>
</feature>
<feature type="sequence conflict" description="In Ref. 2." evidence="10" ref="2">
    <original>Q</original>
    <variation>L</variation>
    <location>
        <position position="103"/>
    </location>
</feature>
<feature type="non-terminal residue">
    <location>
        <position position="123"/>
    </location>
</feature>
<gene>
    <name evidence="4 9" type="primary">IGHV4-34</name>
</gene>
<dbReference type="EMBL" id="AC245166">
    <property type="status" value="NOT_ANNOTATED_CDS"/>
    <property type="molecule type" value="Genomic_DNA"/>
</dbReference>
<dbReference type="PIR" id="A02101">
    <property type="entry name" value="G1HUH2"/>
</dbReference>
<dbReference type="EMDB" id="EMD-11812"/>
<dbReference type="EMDB" id="EMD-11813"/>
<dbReference type="EMDB" id="EMD-14783"/>
<dbReference type="EMDB" id="EMD-17819"/>
<dbReference type="EMDB" id="EMD-26655"/>
<dbReference type="EMDB" id="EMD-27990"/>
<dbReference type="EMDB" id="EMD-38610"/>
<dbReference type="EMDB" id="EMD-39196"/>
<dbReference type="EMDB" id="EMD-41048"/>
<dbReference type="EMDB" id="EMD-41422"/>
<dbReference type="EMDB" id="EMD-41441"/>
<dbReference type="EMDB" id="EMD-43532"/>
<dbReference type="SMR" id="P06331"/>
<dbReference type="FunCoup" id="P06331">
    <property type="interactions" value="401"/>
</dbReference>
<dbReference type="IMGT_GENE-DB" id="IGHV4-34"/>
<dbReference type="GlyCosmos" id="P06331">
    <property type="glycosylation" value="1 site, No reported glycans"/>
</dbReference>
<dbReference type="GlyGen" id="P06331">
    <property type="glycosylation" value="1 site"/>
</dbReference>
<dbReference type="BioMuta" id="IGHV4-34"/>
<dbReference type="DMDM" id="123830"/>
<dbReference type="jPOST" id="P06331"/>
<dbReference type="MassIVE" id="P06331"/>
<dbReference type="Ensembl" id="ENST00000390616.2">
    <property type="protein sequence ID" value="ENSP00000375025.2"/>
    <property type="gene ID" value="ENSG00000211956.2"/>
</dbReference>
<dbReference type="Ensembl" id="ENST00000612474.2">
    <property type="protein sequence ID" value="ENSP00000482820.2"/>
    <property type="gene ID" value="ENSG00000276491.2"/>
</dbReference>
<dbReference type="UCSC" id="uc059ggi.1">
    <property type="organism name" value="human"/>
</dbReference>
<dbReference type="AGR" id="HGNC:5650"/>
<dbReference type="GeneCards" id="IGHV4-34"/>
<dbReference type="HGNC" id="HGNC:5650">
    <property type="gene designation" value="IGHV4-34"/>
</dbReference>
<dbReference type="HPA" id="ENSG00000211956">
    <property type="expression patterns" value="Tissue enriched (urinary)"/>
</dbReference>
<dbReference type="MalaCards" id="IGHV4-34"/>
<dbReference type="neXtProt" id="NX_P06331"/>
<dbReference type="OpenTargets" id="ENSG00000211956"/>
<dbReference type="Orphanet" id="300878">
    <property type="disease" value="Hairy cell leukemia variant"/>
</dbReference>
<dbReference type="VEuPathDB" id="HostDB:ENSG00000211956"/>
<dbReference type="GeneTree" id="ENSGT01030000234536"/>
<dbReference type="InParanoid" id="P06331"/>
<dbReference type="OMA" id="WIGEINH"/>
<dbReference type="OrthoDB" id="9536275at2759"/>
<dbReference type="PAN-GO" id="P06331">
    <property type="GO annotations" value="11 GO annotations based on evolutionary models"/>
</dbReference>
<dbReference type="PhylomeDB" id="P06331"/>
<dbReference type="PathwayCommons" id="P06331"/>
<dbReference type="Reactome" id="R-HSA-166663">
    <property type="pathway name" value="Initial triggering of complement"/>
</dbReference>
<dbReference type="Reactome" id="R-HSA-173623">
    <property type="pathway name" value="Classical antibody-mediated complement activation"/>
</dbReference>
<dbReference type="Reactome" id="R-HSA-198933">
    <property type="pathway name" value="Immunoregulatory interactions between a Lymphoid and a non-Lymphoid cell"/>
</dbReference>
<dbReference type="Reactome" id="R-HSA-202733">
    <property type="pathway name" value="Cell surface interactions at the vascular wall"/>
</dbReference>
<dbReference type="Reactome" id="R-HSA-2029481">
    <property type="pathway name" value="FCGR activation"/>
</dbReference>
<dbReference type="Reactome" id="R-HSA-2029482">
    <property type="pathway name" value="Regulation of actin dynamics for phagocytic cup formation"/>
</dbReference>
<dbReference type="Reactome" id="R-HSA-2029485">
    <property type="pathway name" value="Role of phospholipids in phagocytosis"/>
</dbReference>
<dbReference type="Reactome" id="R-HSA-2168880">
    <property type="pathway name" value="Scavenging of heme from plasma"/>
</dbReference>
<dbReference type="Reactome" id="R-HSA-2454202">
    <property type="pathway name" value="Fc epsilon receptor (FCERI) signaling"/>
</dbReference>
<dbReference type="Reactome" id="R-HSA-2730905">
    <property type="pathway name" value="Role of LAT2/NTAL/LAB on calcium mobilization"/>
</dbReference>
<dbReference type="Reactome" id="R-HSA-2871796">
    <property type="pathway name" value="FCERI mediated MAPK activation"/>
</dbReference>
<dbReference type="Reactome" id="R-HSA-2871809">
    <property type="pathway name" value="FCERI mediated Ca+2 mobilization"/>
</dbReference>
<dbReference type="Reactome" id="R-HSA-2871837">
    <property type="pathway name" value="FCERI mediated NF-kB activation"/>
</dbReference>
<dbReference type="Reactome" id="R-HSA-5690714">
    <property type="pathway name" value="CD22 mediated BCR regulation"/>
</dbReference>
<dbReference type="Reactome" id="R-HSA-9664323">
    <property type="pathway name" value="FCGR3A-mediated IL10 synthesis"/>
</dbReference>
<dbReference type="Reactome" id="R-HSA-9664422">
    <property type="pathway name" value="FCGR3A-mediated phagocytosis"/>
</dbReference>
<dbReference type="Reactome" id="R-HSA-9679191">
    <property type="pathway name" value="Potential therapeutics for SARS"/>
</dbReference>
<dbReference type="Reactome" id="R-HSA-977606">
    <property type="pathway name" value="Regulation of Complement cascade"/>
</dbReference>
<dbReference type="Reactome" id="R-HSA-983695">
    <property type="pathway name" value="Antigen activates B Cell Receptor (BCR) leading to generation of second messengers"/>
</dbReference>
<dbReference type="ChiTaRS" id="IGHV4-34">
    <property type="organism name" value="human"/>
</dbReference>
<dbReference type="Pharos" id="P06331">
    <property type="development level" value="Tdark"/>
</dbReference>
<dbReference type="PRO" id="PR:P06331"/>
<dbReference type="Proteomes" id="UP000005640">
    <property type="component" value="Chromosome 14"/>
</dbReference>
<dbReference type="RNAct" id="P06331">
    <property type="molecule type" value="protein"/>
</dbReference>
<dbReference type="Bgee" id="ENSG00000211956">
    <property type="expression patterns" value="Expressed in rectum and 97 other cell types or tissues"/>
</dbReference>
<dbReference type="GO" id="GO:0005576">
    <property type="term" value="C:extracellular region"/>
    <property type="evidence" value="ECO:0000304"/>
    <property type="project" value="Reactome"/>
</dbReference>
<dbReference type="GO" id="GO:0019814">
    <property type="term" value="C:immunoglobulin complex"/>
    <property type="evidence" value="ECO:0007669"/>
    <property type="project" value="UniProtKB-KW"/>
</dbReference>
<dbReference type="GO" id="GO:0005886">
    <property type="term" value="C:plasma membrane"/>
    <property type="evidence" value="ECO:0000304"/>
    <property type="project" value="Reactome"/>
</dbReference>
<dbReference type="GO" id="GO:0003823">
    <property type="term" value="F:antigen binding"/>
    <property type="evidence" value="ECO:0000318"/>
    <property type="project" value="GO_Central"/>
</dbReference>
<dbReference type="GO" id="GO:0006955">
    <property type="term" value="P:immune response"/>
    <property type="evidence" value="ECO:0000303"/>
    <property type="project" value="UniProtKB"/>
</dbReference>
<dbReference type="GO" id="GO:0016064">
    <property type="term" value="P:immunoglobulin mediated immune response"/>
    <property type="evidence" value="ECO:0000318"/>
    <property type="project" value="GO_Central"/>
</dbReference>
<dbReference type="FunFam" id="2.60.40.10:FF:001119">
    <property type="entry name" value="Immunoglobulin heavy variable 4-30-4"/>
    <property type="match status" value="1"/>
</dbReference>
<dbReference type="Gene3D" id="2.60.40.10">
    <property type="entry name" value="Immunoglobulins"/>
    <property type="match status" value="1"/>
</dbReference>
<dbReference type="InterPro" id="IPR007110">
    <property type="entry name" value="Ig-like_dom"/>
</dbReference>
<dbReference type="InterPro" id="IPR036179">
    <property type="entry name" value="Ig-like_dom_sf"/>
</dbReference>
<dbReference type="InterPro" id="IPR013783">
    <property type="entry name" value="Ig-like_fold"/>
</dbReference>
<dbReference type="InterPro" id="IPR013106">
    <property type="entry name" value="Ig_V-set"/>
</dbReference>
<dbReference type="InterPro" id="IPR050199">
    <property type="entry name" value="IgHV"/>
</dbReference>
<dbReference type="PANTHER" id="PTHR23266">
    <property type="entry name" value="IMMUNOGLOBULIN HEAVY CHAIN"/>
    <property type="match status" value="1"/>
</dbReference>
<dbReference type="Pfam" id="PF07686">
    <property type="entry name" value="V-set"/>
    <property type="match status" value="1"/>
</dbReference>
<dbReference type="SMART" id="SM00406">
    <property type="entry name" value="IGv"/>
    <property type="match status" value="1"/>
</dbReference>
<dbReference type="SUPFAM" id="SSF48726">
    <property type="entry name" value="Immunoglobulin"/>
    <property type="match status" value="1"/>
</dbReference>
<dbReference type="PROSITE" id="PS50835">
    <property type="entry name" value="IG_LIKE"/>
    <property type="match status" value="1"/>
</dbReference>
<organism>
    <name type="scientific">Homo sapiens</name>
    <name type="common">Human</name>
    <dbReference type="NCBI Taxonomy" id="9606"/>
    <lineage>
        <taxon>Eukaryota</taxon>
        <taxon>Metazoa</taxon>
        <taxon>Chordata</taxon>
        <taxon>Craniata</taxon>
        <taxon>Vertebrata</taxon>
        <taxon>Euteleostomi</taxon>
        <taxon>Mammalia</taxon>
        <taxon>Eutheria</taxon>
        <taxon>Euarchontoglires</taxon>
        <taxon>Primates</taxon>
        <taxon>Haplorrhini</taxon>
        <taxon>Catarrhini</taxon>
        <taxon>Hominidae</taxon>
        <taxon>Homo</taxon>
    </lineage>
</organism>
<accession>P06331</accession>
<accession>A0A0A0MS12</accession>
<accession>A0A0G2JP38</accession>
<sequence length="123" mass="13815">MDLLHKNMKHLWFFLLLVAAPRWVLSQVQLQQWGAGLLKPSETLSLTCAVYGGSFSGYYWSWIRQPPGKGLEWIGEINHSGSTNYNPSLKSRVTISVDTSKNQFSLKLSSVTAADTAVYYCAR</sequence>
<evidence type="ECO:0000250" key="1">
    <source>
        <dbReference type="UniProtKB" id="P23083"/>
    </source>
</evidence>
<evidence type="ECO:0000255" key="2"/>
<evidence type="ECO:0000255" key="3">
    <source>
        <dbReference type="PROSITE-ProRule" id="PRU00114"/>
    </source>
</evidence>
<evidence type="ECO:0000303" key="4">
    <source>
    </source>
</evidence>
<evidence type="ECO:0000303" key="5">
    <source>
    </source>
</evidence>
<evidence type="ECO:0000303" key="6">
    <source>
    </source>
</evidence>
<evidence type="ECO:0000303" key="7">
    <source>
    </source>
</evidence>
<evidence type="ECO:0000303" key="8">
    <source>
    </source>
</evidence>
<evidence type="ECO:0000303" key="9">
    <source ref="4"/>
</evidence>
<evidence type="ECO:0000305" key="10"/>
<evidence type="ECO:0000305" key="11">
    <source>
    </source>
</evidence>
<protein>
    <recommendedName>
        <fullName evidence="4 9">Immunoglobulin heavy variable 4-34</fullName>
    </recommendedName>
    <alternativeName>
        <fullName evidence="11">Ig heavy chain V-II region ARH-77</fullName>
    </alternativeName>
</protein>